<accession>P19288</accession>
<organism>
    <name type="scientific">Thermoproteus tenax virus 1 (strain KRA1)</name>
    <name type="common">TTV1</name>
    <dbReference type="NCBI Taxonomy" id="10480"/>
    <lineage>
        <taxon>Viruses</taxon>
        <taxon>Adnaviria</taxon>
        <taxon>Zilligvirae</taxon>
        <taxon>Taleaviricota</taxon>
        <taxon>Tokiviricetes</taxon>
        <taxon>Primavirales</taxon>
        <taxon>Tristromaviridae</taxon>
        <taxon>Betatristromavirus</taxon>
        <taxon>Betatristromavirus TTV1</taxon>
    </lineage>
</organism>
<organismHost>
    <name type="scientific">Thermoproteus tenax</name>
    <dbReference type="NCBI Taxonomy" id="2271"/>
</organismHost>
<keyword id="KW-1185">Reference proteome</keyword>
<sequence>MKKFINRLLLMLMSVVVGRIAGANELEMRYQAGIEVKRDVQVKRVERKISYRAPRIEDAIALNIYVEDKISGIKPYIPGLTGLVRKAIKIAYRDGVDSAMNIFKSYDTAIQNEIRKIIEEGLKMYEKIRSEGRP</sequence>
<name>YORD_TTV1K</name>
<dbReference type="EMBL" id="X14855">
    <property type="protein sequence ID" value="CAA32982.1"/>
    <property type="molecule type" value="Genomic_DNA"/>
</dbReference>
<dbReference type="SMR" id="P19288"/>
<dbReference type="Proteomes" id="UP000009250">
    <property type="component" value="Genome"/>
</dbReference>
<feature type="chain" id="PRO_0000222970" description="Uncharacterized 15.4 kDa protein">
    <location>
        <begin position="1"/>
        <end position="134"/>
    </location>
</feature>
<protein>
    <recommendedName>
        <fullName>Uncharacterized 15.4 kDa protein</fullName>
    </recommendedName>
</protein>
<proteinExistence type="predicted"/>
<reference key="1">
    <citation type="submission" date="1989-03" db="EMBL/GenBank/DDBJ databases">
        <authorList>
            <person name="Neumann H."/>
        </authorList>
    </citation>
    <scope>NUCLEOTIDE SEQUENCE [GENOMIC DNA]</scope>
</reference>